<reference key="1">
    <citation type="submission" date="2005-09" db="EMBL/GenBank/DDBJ databases">
        <title>Annotation of the Aspergillus terreus NIH2624 genome.</title>
        <authorList>
            <person name="Birren B.W."/>
            <person name="Lander E.S."/>
            <person name="Galagan J.E."/>
            <person name="Nusbaum C."/>
            <person name="Devon K."/>
            <person name="Henn M."/>
            <person name="Ma L.-J."/>
            <person name="Jaffe D.B."/>
            <person name="Butler J."/>
            <person name="Alvarez P."/>
            <person name="Gnerre S."/>
            <person name="Grabherr M."/>
            <person name="Kleber M."/>
            <person name="Mauceli E.W."/>
            <person name="Brockman W."/>
            <person name="Rounsley S."/>
            <person name="Young S.K."/>
            <person name="LaButti K."/>
            <person name="Pushparaj V."/>
            <person name="DeCaprio D."/>
            <person name="Crawford M."/>
            <person name="Koehrsen M."/>
            <person name="Engels R."/>
            <person name="Montgomery P."/>
            <person name="Pearson M."/>
            <person name="Howarth C."/>
            <person name="Larson L."/>
            <person name="Luoma S."/>
            <person name="White J."/>
            <person name="Alvarado L."/>
            <person name="Kodira C.D."/>
            <person name="Zeng Q."/>
            <person name="Oleary S."/>
            <person name="Yandava C."/>
            <person name="Denning D.W."/>
            <person name="Nierman W.C."/>
            <person name="Milne T."/>
            <person name="Madden K."/>
        </authorList>
    </citation>
    <scope>NUCLEOTIDE SEQUENCE [LARGE SCALE GENOMIC DNA]</scope>
    <source>
        <strain>NIH 2624 / FGSC A1156</strain>
    </source>
</reference>
<evidence type="ECO:0000250" key="1"/>
<evidence type="ECO:0000255" key="2"/>
<evidence type="ECO:0000305" key="3"/>
<sequence length="420" mass="45371">MLRKLTPLALALLPLVAGQTIGETPEVHPKLPTWKCSNRHGCVKQDTSVVIDAATHWIHEKGGETSCTGSSGPNPNLCPDKETCAANCVIEGISDYANYGVQTKGSSMTLHQYLRDGNTTKSVSPRVYLLAEDGENYEMLQLLNQEFTFDVDVSTLVCGMNGALYFSEMQRDGGRSELNPAGAARGTGYCDAQCFNIPWINGEANVEGAGACCNEMDIWEANARATGYTPHPCNITQLYECSGAECEANGVCDKPGCGFNPYALGAHDFYGYDLEVDTTKPMTVVTQFYTKDNTTTGALVEIRRLYVQNGHVIQNAVVSVDGESVDSITADYCADPSSAFNRLGGLQRMGEALGRGMVLAFSVWNDAGSFMSWLDGGNSGPCNATEGDPALIEKLHPDTHVTFSNIRWGDIGSTYRGKRR</sequence>
<organism>
    <name type="scientific">Aspergillus terreus (strain NIH 2624 / FGSC A1156)</name>
    <dbReference type="NCBI Taxonomy" id="341663"/>
    <lineage>
        <taxon>Eukaryota</taxon>
        <taxon>Fungi</taxon>
        <taxon>Dikarya</taxon>
        <taxon>Ascomycota</taxon>
        <taxon>Pezizomycotina</taxon>
        <taxon>Eurotiomycetes</taxon>
        <taxon>Eurotiomycetidae</taxon>
        <taxon>Eurotiales</taxon>
        <taxon>Aspergillaceae</taxon>
        <taxon>Aspergillus</taxon>
        <taxon>Aspergillus subgen. Circumdati</taxon>
    </lineage>
</organism>
<protein>
    <recommendedName>
        <fullName>Probable endo-beta-1,4-glucanase celB</fullName>
        <shortName>Endoglucanase celB</shortName>
        <ecNumber>3.2.1.4</ecNumber>
    </recommendedName>
    <alternativeName>
        <fullName>Carboxymethylcellulase celB</fullName>
    </alternativeName>
    <alternativeName>
        <fullName>Cellulase B</fullName>
    </alternativeName>
</protein>
<accession>Q0CC84</accession>
<feature type="signal peptide" evidence="2">
    <location>
        <begin position="1"/>
        <end position="18"/>
    </location>
</feature>
<feature type="chain" id="PRO_0000395158" description="Probable endo-beta-1,4-glucanase celB">
    <location>
        <begin position="19"/>
        <end position="420"/>
    </location>
</feature>
<feature type="active site" description="Nucleophile" evidence="1">
    <location>
        <position position="215"/>
    </location>
</feature>
<feature type="active site" description="Proton donor" evidence="1">
    <location>
        <position position="220"/>
    </location>
</feature>
<feature type="glycosylation site" description="N-linked (GlcNAc...) asparagine" evidence="2">
    <location>
        <position position="118"/>
    </location>
</feature>
<feature type="glycosylation site" description="N-linked (GlcNAc...) asparagine" evidence="2">
    <location>
        <position position="234"/>
    </location>
</feature>
<feature type="glycosylation site" description="N-linked (GlcNAc...) asparagine" evidence="2">
    <location>
        <position position="293"/>
    </location>
</feature>
<feature type="glycosylation site" description="N-linked (GlcNAc...) asparagine" evidence="2">
    <location>
        <position position="383"/>
    </location>
</feature>
<proteinExistence type="inferred from homology"/>
<comment type="function">
    <text evidence="1">Has endoglucanase activity on substrates containing beta-1,4 glycosidic bonds, like in carboxymethylcellulose (CMC), hydroxyethylcellulose (HEC) and beta-glucan. Involved in the degradation of complex natural cellulosic substrates (By similarity).</text>
</comment>
<comment type="catalytic activity">
    <reaction>
        <text>Endohydrolysis of (1-&gt;4)-beta-D-glucosidic linkages in cellulose, lichenin and cereal beta-D-glucans.</text>
        <dbReference type="EC" id="3.2.1.4"/>
    </reaction>
</comment>
<comment type="subcellular location">
    <subcellularLocation>
        <location evidence="1">Secreted</location>
    </subcellularLocation>
</comment>
<comment type="similarity">
    <text evidence="3">Belongs to the glycosyl hydrolase 7 (cellulase C) family.</text>
</comment>
<gene>
    <name type="primary">celB</name>
    <name type="ORF">ATEG_08700</name>
</gene>
<name>CELB_ASPTN</name>
<keyword id="KW-0119">Carbohydrate metabolism</keyword>
<keyword id="KW-0136">Cellulose degradation</keyword>
<keyword id="KW-0325">Glycoprotein</keyword>
<keyword id="KW-0326">Glycosidase</keyword>
<keyword id="KW-0378">Hydrolase</keyword>
<keyword id="KW-0624">Polysaccharide degradation</keyword>
<keyword id="KW-1185">Reference proteome</keyword>
<keyword id="KW-0964">Secreted</keyword>
<keyword id="KW-0732">Signal</keyword>
<dbReference type="EC" id="3.2.1.4"/>
<dbReference type="EMBL" id="CH476606">
    <property type="protein sequence ID" value="EAU30832.1"/>
    <property type="molecule type" value="Genomic_DNA"/>
</dbReference>
<dbReference type="RefSeq" id="XP_001217286.1">
    <property type="nucleotide sequence ID" value="XM_001217285.1"/>
</dbReference>
<dbReference type="SMR" id="Q0CC84"/>
<dbReference type="STRING" id="341663.Q0CC84"/>
<dbReference type="GlyCosmos" id="Q0CC84">
    <property type="glycosylation" value="4 sites, No reported glycans"/>
</dbReference>
<dbReference type="EnsemblFungi" id="EAU30832">
    <property type="protein sequence ID" value="EAU30832"/>
    <property type="gene ID" value="ATEG_08700"/>
</dbReference>
<dbReference type="GeneID" id="4323506"/>
<dbReference type="VEuPathDB" id="FungiDB:ATEG_08700"/>
<dbReference type="eggNOG" id="ENOG502SJT6">
    <property type="taxonomic scope" value="Eukaryota"/>
</dbReference>
<dbReference type="HOGENOM" id="CLU_020817_0_1_1"/>
<dbReference type="OMA" id="VCCNEMD"/>
<dbReference type="OrthoDB" id="412382at2759"/>
<dbReference type="Proteomes" id="UP000007963">
    <property type="component" value="Unassembled WGS sequence"/>
</dbReference>
<dbReference type="GO" id="GO:0005576">
    <property type="term" value="C:extracellular region"/>
    <property type="evidence" value="ECO:0007669"/>
    <property type="project" value="UniProtKB-SubCell"/>
</dbReference>
<dbReference type="GO" id="GO:0008810">
    <property type="term" value="F:cellulase activity"/>
    <property type="evidence" value="ECO:0007669"/>
    <property type="project" value="UniProtKB-EC"/>
</dbReference>
<dbReference type="GO" id="GO:0030245">
    <property type="term" value="P:cellulose catabolic process"/>
    <property type="evidence" value="ECO:0007669"/>
    <property type="project" value="UniProtKB-KW"/>
</dbReference>
<dbReference type="CDD" id="cd07999">
    <property type="entry name" value="GH7_CBH_EG"/>
    <property type="match status" value="1"/>
</dbReference>
<dbReference type="Gene3D" id="2.70.100.10">
    <property type="entry name" value="Glycoside hydrolase, family 7, domain"/>
    <property type="match status" value="1"/>
</dbReference>
<dbReference type="InterPro" id="IPR013320">
    <property type="entry name" value="ConA-like_dom_sf"/>
</dbReference>
<dbReference type="InterPro" id="IPR001722">
    <property type="entry name" value="Glyco_hydro_7"/>
</dbReference>
<dbReference type="InterPro" id="IPR037019">
    <property type="entry name" value="Glyco_hydro_7_sf"/>
</dbReference>
<dbReference type="PANTHER" id="PTHR33753">
    <property type="entry name" value="1,4-BETA-D-GLUCAN CELLOBIOHYDROLASE B"/>
    <property type="match status" value="1"/>
</dbReference>
<dbReference type="PANTHER" id="PTHR33753:SF1">
    <property type="entry name" value="ENDO-BETA-1,4-GLUCANASE CELB"/>
    <property type="match status" value="1"/>
</dbReference>
<dbReference type="Pfam" id="PF00840">
    <property type="entry name" value="Glyco_hydro_7"/>
    <property type="match status" value="1"/>
</dbReference>
<dbReference type="PRINTS" id="PR00734">
    <property type="entry name" value="GLHYDRLASE7"/>
</dbReference>
<dbReference type="SUPFAM" id="SSF49899">
    <property type="entry name" value="Concanavalin A-like lectins/glucanases"/>
    <property type="match status" value="1"/>
</dbReference>